<evidence type="ECO:0000255" key="1">
    <source>
        <dbReference type="HAMAP-Rule" id="MF_00385"/>
    </source>
</evidence>
<evidence type="ECO:0000256" key="2">
    <source>
        <dbReference type="SAM" id="MobiDB-lite"/>
    </source>
</evidence>
<evidence type="ECO:0000305" key="3"/>
<feature type="chain" id="PRO_0000243884" description="Small ribosomal subunit protein bS16">
    <location>
        <begin position="1"/>
        <end position="159"/>
    </location>
</feature>
<feature type="region of interest" description="Disordered" evidence="2">
    <location>
        <begin position="102"/>
        <end position="159"/>
    </location>
</feature>
<feature type="compositionally biased region" description="Low complexity" evidence="2">
    <location>
        <begin position="102"/>
        <end position="119"/>
    </location>
</feature>
<feature type="compositionally biased region" description="Acidic residues" evidence="2">
    <location>
        <begin position="120"/>
        <end position="129"/>
    </location>
</feature>
<feature type="compositionally biased region" description="Low complexity" evidence="2">
    <location>
        <begin position="130"/>
        <end position="145"/>
    </location>
</feature>
<reference key="1">
    <citation type="journal article" date="2007" name="ISME J.">
        <title>Population level functional diversity in a microbial community revealed by comparative genomic and metagenomic analyses.</title>
        <authorList>
            <person name="Bhaya D."/>
            <person name="Grossman A.R."/>
            <person name="Steunou A.-S."/>
            <person name="Khuri N."/>
            <person name="Cohan F.M."/>
            <person name="Hamamura N."/>
            <person name="Melendrez M.C."/>
            <person name="Bateson M.M."/>
            <person name="Ward D.M."/>
            <person name="Heidelberg J.F."/>
        </authorList>
    </citation>
    <scope>NUCLEOTIDE SEQUENCE [LARGE SCALE GENOMIC DNA]</scope>
    <source>
        <strain>JA-2-3B'a(2-13)</strain>
    </source>
</reference>
<dbReference type="EMBL" id="CP000240">
    <property type="protein sequence ID" value="ABD01442.1"/>
    <property type="molecule type" value="Genomic_DNA"/>
</dbReference>
<dbReference type="RefSeq" id="WP_011432103.1">
    <property type="nucleotide sequence ID" value="NC_007776.1"/>
</dbReference>
<dbReference type="SMR" id="Q2JP53"/>
<dbReference type="STRING" id="321332.CYB_0448"/>
<dbReference type="KEGG" id="cyb:CYB_0448"/>
<dbReference type="eggNOG" id="COG0228">
    <property type="taxonomic scope" value="Bacteria"/>
</dbReference>
<dbReference type="HOGENOM" id="CLU_100590_3_2_3"/>
<dbReference type="OrthoDB" id="9807878at2"/>
<dbReference type="Proteomes" id="UP000001938">
    <property type="component" value="Chromosome"/>
</dbReference>
<dbReference type="GO" id="GO:0005737">
    <property type="term" value="C:cytoplasm"/>
    <property type="evidence" value="ECO:0007669"/>
    <property type="project" value="UniProtKB-ARBA"/>
</dbReference>
<dbReference type="GO" id="GO:0015935">
    <property type="term" value="C:small ribosomal subunit"/>
    <property type="evidence" value="ECO:0007669"/>
    <property type="project" value="TreeGrafter"/>
</dbReference>
<dbReference type="GO" id="GO:0003735">
    <property type="term" value="F:structural constituent of ribosome"/>
    <property type="evidence" value="ECO:0007669"/>
    <property type="project" value="InterPro"/>
</dbReference>
<dbReference type="GO" id="GO:0006412">
    <property type="term" value="P:translation"/>
    <property type="evidence" value="ECO:0007669"/>
    <property type="project" value="UniProtKB-UniRule"/>
</dbReference>
<dbReference type="Gene3D" id="3.30.1320.10">
    <property type="match status" value="1"/>
</dbReference>
<dbReference type="HAMAP" id="MF_00385">
    <property type="entry name" value="Ribosomal_bS16"/>
    <property type="match status" value="1"/>
</dbReference>
<dbReference type="InterPro" id="IPR000307">
    <property type="entry name" value="Ribosomal_bS16"/>
</dbReference>
<dbReference type="InterPro" id="IPR020592">
    <property type="entry name" value="Ribosomal_bS16_CS"/>
</dbReference>
<dbReference type="InterPro" id="IPR023803">
    <property type="entry name" value="Ribosomal_bS16_dom_sf"/>
</dbReference>
<dbReference type="NCBIfam" id="TIGR00002">
    <property type="entry name" value="S16"/>
    <property type="match status" value="1"/>
</dbReference>
<dbReference type="PANTHER" id="PTHR12919">
    <property type="entry name" value="30S RIBOSOMAL PROTEIN S16"/>
    <property type="match status" value="1"/>
</dbReference>
<dbReference type="PANTHER" id="PTHR12919:SF20">
    <property type="entry name" value="SMALL RIBOSOMAL SUBUNIT PROTEIN BS16M"/>
    <property type="match status" value="1"/>
</dbReference>
<dbReference type="Pfam" id="PF00886">
    <property type="entry name" value="Ribosomal_S16"/>
    <property type="match status" value="1"/>
</dbReference>
<dbReference type="SUPFAM" id="SSF54565">
    <property type="entry name" value="Ribosomal protein S16"/>
    <property type="match status" value="1"/>
</dbReference>
<dbReference type="PROSITE" id="PS00732">
    <property type="entry name" value="RIBOSOMAL_S16"/>
    <property type="match status" value="1"/>
</dbReference>
<name>RS16_SYNJB</name>
<gene>
    <name evidence="1" type="primary">rpsP</name>
    <name evidence="1" type="synonym">rps16</name>
    <name type="ordered locus">CYB_0448</name>
</gene>
<sequence>MVKLRLKRYGKKRQPSYRIIAIESKSRREARPLEELGYYNPRTKETVLQTAGLLKWLRCGAQPTETVDSLLKKAGIYEMLKAGEGGVVASIRIPAMAKPEAGIPEAAEEAPATESVAEAEVADVPESELSEAATETAAAELSPPEAEVEKPQVEEAVEA</sequence>
<accession>Q2JP53</accession>
<organism>
    <name type="scientific">Synechococcus sp. (strain JA-2-3B'a(2-13))</name>
    <name type="common">Cyanobacteria bacterium Yellowstone B-Prime</name>
    <dbReference type="NCBI Taxonomy" id="321332"/>
    <lineage>
        <taxon>Bacteria</taxon>
        <taxon>Bacillati</taxon>
        <taxon>Cyanobacteriota</taxon>
        <taxon>Cyanophyceae</taxon>
        <taxon>Synechococcales</taxon>
        <taxon>Synechococcaceae</taxon>
        <taxon>Synechococcus</taxon>
    </lineage>
</organism>
<comment type="similarity">
    <text evidence="1">Belongs to the bacterial ribosomal protein bS16 family.</text>
</comment>
<keyword id="KW-1185">Reference proteome</keyword>
<keyword id="KW-0687">Ribonucleoprotein</keyword>
<keyword id="KW-0689">Ribosomal protein</keyword>
<proteinExistence type="inferred from homology"/>
<protein>
    <recommendedName>
        <fullName evidence="1">Small ribosomal subunit protein bS16</fullName>
    </recommendedName>
    <alternativeName>
        <fullName evidence="3">30S ribosomal protein S16</fullName>
    </alternativeName>
</protein>